<name>CH60_BORRA</name>
<evidence type="ECO:0000255" key="1">
    <source>
        <dbReference type="HAMAP-Rule" id="MF_00600"/>
    </source>
</evidence>
<gene>
    <name evidence="1" type="primary">groEL</name>
    <name evidence="1" type="synonym">groL</name>
    <name type="ordered locus">BRE_655</name>
</gene>
<sequence>MAKDIYFNEDARKSLLSGIEKLSNAVKVTLGPKGRNVLIDKKFGSPIVTKDGVSVAREIDLENSFENMGAQLLKEVAIKTNDLAGDGTTTATVLAYAIAREGLKNVSSGINPIGIKKGIDHAVALAAEKIRKSAKKITTKEEIAQVASISANNDTSIGEKIAEAMDRVGKDGVITVEESKTFDTTISYVEGMQFDRGYLSPYFSTNKENMSVSFDDTYILICEKKISTIKELLPVLEKVVNTNKPLLIIAEDIEGDALAALVLNSVRGALKVCAIKAPGFGDRRKAMLEDIAILTGGVLVSEELGLTLENVELEQLGQAKSVKVDKDNTTIINTGNREQIRERAELIKKQIEETSSEYDKEKLQERLAKLVGGVAVINVGAVTEVELKEKKHRVEDALSATRAAVEEGVVPGGGSTLIEVAMYLDTVDVSKLSYEEKQGFEIVKRSLEEPMRQIISNAGFESSIYIHQIKTDKKGLGFDAASFKWVNMIESGIIDPAKVTRSALQNAASIAGLLLTTECAITEIKEEKNSAGGNYPMDPGMGMM</sequence>
<protein>
    <recommendedName>
        <fullName evidence="1">Chaperonin GroEL</fullName>
        <ecNumber evidence="1">5.6.1.7</ecNumber>
    </recommendedName>
    <alternativeName>
        <fullName evidence="1">60 kDa chaperonin</fullName>
    </alternativeName>
    <alternativeName>
        <fullName evidence="1">Chaperonin-60</fullName>
        <shortName evidence="1">Cpn60</shortName>
    </alternativeName>
</protein>
<comment type="function">
    <text evidence="1">Together with its co-chaperonin GroES, plays an essential role in assisting protein folding. The GroEL-GroES system forms a nano-cage that allows encapsulation of the non-native substrate proteins and provides a physical environment optimized to promote and accelerate protein folding.</text>
</comment>
<comment type="catalytic activity">
    <reaction evidence="1">
        <text>ATP + H2O + a folded polypeptide = ADP + phosphate + an unfolded polypeptide.</text>
        <dbReference type="EC" id="5.6.1.7"/>
    </reaction>
</comment>
<comment type="subunit">
    <text evidence="1">Forms a cylinder of 14 subunits composed of two heptameric rings stacked back-to-back. Interacts with the co-chaperonin GroES.</text>
</comment>
<comment type="subcellular location">
    <subcellularLocation>
        <location evidence="1">Cytoplasm</location>
    </subcellularLocation>
</comment>
<comment type="similarity">
    <text evidence="1">Belongs to the chaperonin (HSP60) family.</text>
</comment>
<dbReference type="EC" id="5.6.1.7" evidence="1"/>
<dbReference type="EMBL" id="CP000993">
    <property type="protein sequence ID" value="ACH94875.1"/>
    <property type="molecule type" value="Genomic_DNA"/>
</dbReference>
<dbReference type="RefSeq" id="WP_012538390.1">
    <property type="nucleotide sequence ID" value="NZ_CP169983.1"/>
</dbReference>
<dbReference type="SMR" id="B5RPZ1"/>
<dbReference type="KEGG" id="bre:BRE_655"/>
<dbReference type="HOGENOM" id="CLU_016503_3_0_12"/>
<dbReference type="Proteomes" id="UP000000612">
    <property type="component" value="Chromosome"/>
</dbReference>
<dbReference type="GO" id="GO:0005737">
    <property type="term" value="C:cytoplasm"/>
    <property type="evidence" value="ECO:0007669"/>
    <property type="project" value="UniProtKB-SubCell"/>
</dbReference>
<dbReference type="GO" id="GO:0005524">
    <property type="term" value="F:ATP binding"/>
    <property type="evidence" value="ECO:0007669"/>
    <property type="project" value="UniProtKB-UniRule"/>
</dbReference>
<dbReference type="GO" id="GO:0140662">
    <property type="term" value="F:ATP-dependent protein folding chaperone"/>
    <property type="evidence" value="ECO:0007669"/>
    <property type="project" value="InterPro"/>
</dbReference>
<dbReference type="GO" id="GO:0016853">
    <property type="term" value="F:isomerase activity"/>
    <property type="evidence" value="ECO:0007669"/>
    <property type="project" value="UniProtKB-KW"/>
</dbReference>
<dbReference type="GO" id="GO:0051082">
    <property type="term" value="F:unfolded protein binding"/>
    <property type="evidence" value="ECO:0007669"/>
    <property type="project" value="UniProtKB-UniRule"/>
</dbReference>
<dbReference type="GO" id="GO:0042026">
    <property type="term" value="P:protein refolding"/>
    <property type="evidence" value="ECO:0007669"/>
    <property type="project" value="UniProtKB-UniRule"/>
</dbReference>
<dbReference type="CDD" id="cd03344">
    <property type="entry name" value="GroEL"/>
    <property type="match status" value="1"/>
</dbReference>
<dbReference type="FunFam" id="3.50.7.10:FF:000001">
    <property type="entry name" value="60 kDa chaperonin"/>
    <property type="match status" value="1"/>
</dbReference>
<dbReference type="Gene3D" id="3.50.7.10">
    <property type="entry name" value="GroEL"/>
    <property type="match status" value="1"/>
</dbReference>
<dbReference type="Gene3D" id="1.10.560.10">
    <property type="entry name" value="GroEL-like equatorial domain"/>
    <property type="match status" value="1"/>
</dbReference>
<dbReference type="Gene3D" id="3.30.260.10">
    <property type="entry name" value="TCP-1-like chaperonin intermediate domain"/>
    <property type="match status" value="1"/>
</dbReference>
<dbReference type="HAMAP" id="MF_00600">
    <property type="entry name" value="CH60"/>
    <property type="match status" value="1"/>
</dbReference>
<dbReference type="InterPro" id="IPR018370">
    <property type="entry name" value="Chaperonin_Cpn60_CS"/>
</dbReference>
<dbReference type="InterPro" id="IPR001844">
    <property type="entry name" value="Cpn60/GroEL"/>
</dbReference>
<dbReference type="InterPro" id="IPR002423">
    <property type="entry name" value="Cpn60/GroEL/TCP-1"/>
</dbReference>
<dbReference type="InterPro" id="IPR027409">
    <property type="entry name" value="GroEL-like_apical_dom_sf"/>
</dbReference>
<dbReference type="InterPro" id="IPR027413">
    <property type="entry name" value="GROEL-like_equatorial_sf"/>
</dbReference>
<dbReference type="InterPro" id="IPR027410">
    <property type="entry name" value="TCP-1-like_intermed_sf"/>
</dbReference>
<dbReference type="NCBIfam" id="TIGR02348">
    <property type="entry name" value="GroEL"/>
    <property type="match status" value="1"/>
</dbReference>
<dbReference type="NCBIfam" id="NF000592">
    <property type="entry name" value="PRK00013.1"/>
    <property type="match status" value="1"/>
</dbReference>
<dbReference type="NCBIfam" id="NF009487">
    <property type="entry name" value="PRK12849.1"/>
    <property type="match status" value="1"/>
</dbReference>
<dbReference type="NCBIfam" id="NF009488">
    <property type="entry name" value="PRK12850.1"/>
    <property type="match status" value="1"/>
</dbReference>
<dbReference type="NCBIfam" id="NF009489">
    <property type="entry name" value="PRK12851.1"/>
    <property type="match status" value="1"/>
</dbReference>
<dbReference type="PANTHER" id="PTHR45633">
    <property type="entry name" value="60 KDA HEAT SHOCK PROTEIN, MITOCHONDRIAL"/>
    <property type="match status" value="1"/>
</dbReference>
<dbReference type="Pfam" id="PF00118">
    <property type="entry name" value="Cpn60_TCP1"/>
    <property type="match status" value="1"/>
</dbReference>
<dbReference type="PRINTS" id="PR00298">
    <property type="entry name" value="CHAPERONIN60"/>
</dbReference>
<dbReference type="SUPFAM" id="SSF52029">
    <property type="entry name" value="GroEL apical domain-like"/>
    <property type="match status" value="1"/>
</dbReference>
<dbReference type="SUPFAM" id="SSF48592">
    <property type="entry name" value="GroEL equatorial domain-like"/>
    <property type="match status" value="1"/>
</dbReference>
<dbReference type="SUPFAM" id="SSF54849">
    <property type="entry name" value="GroEL-intermediate domain like"/>
    <property type="match status" value="1"/>
</dbReference>
<dbReference type="PROSITE" id="PS00296">
    <property type="entry name" value="CHAPERONINS_CPN60"/>
    <property type="match status" value="1"/>
</dbReference>
<organism>
    <name type="scientific">Borrelia recurrentis (strain A1)</name>
    <dbReference type="NCBI Taxonomy" id="412418"/>
    <lineage>
        <taxon>Bacteria</taxon>
        <taxon>Pseudomonadati</taxon>
        <taxon>Spirochaetota</taxon>
        <taxon>Spirochaetia</taxon>
        <taxon>Spirochaetales</taxon>
        <taxon>Borreliaceae</taxon>
        <taxon>Borrelia</taxon>
    </lineage>
</organism>
<feature type="chain" id="PRO_1000129981" description="Chaperonin GroEL">
    <location>
        <begin position="1"/>
        <end position="544"/>
    </location>
</feature>
<feature type="binding site" evidence="1">
    <location>
        <begin position="29"/>
        <end position="32"/>
    </location>
    <ligand>
        <name>ATP</name>
        <dbReference type="ChEBI" id="CHEBI:30616"/>
    </ligand>
</feature>
<feature type="binding site" evidence="1">
    <location>
        <position position="50"/>
    </location>
    <ligand>
        <name>ATP</name>
        <dbReference type="ChEBI" id="CHEBI:30616"/>
    </ligand>
</feature>
<feature type="binding site" evidence="1">
    <location>
        <begin position="86"/>
        <end position="90"/>
    </location>
    <ligand>
        <name>ATP</name>
        <dbReference type="ChEBI" id="CHEBI:30616"/>
    </ligand>
</feature>
<feature type="binding site" evidence="1">
    <location>
        <position position="413"/>
    </location>
    <ligand>
        <name>ATP</name>
        <dbReference type="ChEBI" id="CHEBI:30616"/>
    </ligand>
</feature>
<feature type="binding site" evidence="1">
    <location>
        <begin position="479"/>
        <end position="481"/>
    </location>
    <ligand>
        <name>ATP</name>
        <dbReference type="ChEBI" id="CHEBI:30616"/>
    </ligand>
</feature>
<feature type="binding site" evidence="1">
    <location>
        <position position="495"/>
    </location>
    <ligand>
        <name>ATP</name>
        <dbReference type="ChEBI" id="CHEBI:30616"/>
    </ligand>
</feature>
<proteinExistence type="inferred from homology"/>
<accession>B5RPZ1</accession>
<keyword id="KW-0067">ATP-binding</keyword>
<keyword id="KW-0143">Chaperone</keyword>
<keyword id="KW-0963">Cytoplasm</keyword>
<keyword id="KW-0413">Isomerase</keyword>
<keyword id="KW-0547">Nucleotide-binding</keyword>
<keyword id="KW-0346">Stress response</keyword>
<reference key="1">
    <citation type="journal article" date="2008" name="PLoS Genet.">
        <title>The genome of Borrelia recurrentis, the agent of deadly louse-borne relapsing fever, is a degraded subset of tick-borne Borrelia duttonii.</title>
        <authorList>
            <person name="Lescot M."/>
            <person name="Audic S."/>
            <person name="Robert C."/>
            <person name="Nguyen T.T."/>
            <person name="Blanc G."/>
            <person name="Cutler S.J."/>
            <person name="Wincker P."/>
            <person name="Couloux A."/>
            <person name="Claverie J.-M."/>
            <person name="Raoult D."/>
            <person name="Drancourt M."/>
        </authorList>
    </citation>
    <scope>NUCLEOTIDE SEQUENCE [LARGE SCALE GENOMIC DNA]</scope>
    <source>
        <strain>A1</strain>
    </source>
</reference>